<evidence type="ECO:0000255" key="1">
    <source>
        <dbReference type="HAMAP-Rule" id="MF_01322"/>
    </source>
</evidence>
<evidence type="ECO:0000256" key="2">
    <source>
        <dbReference type="SAM" id="MobiDB-lite"/>
    </source>
</evidence>
<name>RPOC_MYCGI</name>
<organism>
    <name type="scientific">Mycolicibacterium gilvum (strain PYR-GCK)</name>
    <name type="common">Mycobacterium gilvum (strain PYR-GCK)</name>
    <dbReference type="NCBI Taxonomy" id="350054"/>
    <lineage>
        <taxon>Bacteria</taxon>
        <taxon>Bacillati</taxon>
        <taxon>Actinomycetota</taxon>
        <taxon>Actinomycetes</taxon>
        <taxon>Mycobacteriales</taxon>
        <taxon>Mycobacteriaceae</taxon>
        <taxon>Mycolicibacterium</taxon>
    </lineage>
</organism>
<proteinExistence type="inferred from homology"/>
<gene>
    <name evidence="1" type="primary">rpoC</name>
    <name type="ordered locus">Mflv_5096</name>
</gene>
<keyword id="KW-0240">DNA-directed RNA polymerase</keyword>
<keyword id="KW-0460">Magnesium</keyword>
<keyword id="KW-0479">Metal-binding</keyword>
<keyword id="KW-0548">Nucleotidyltransferase</keyword>
<keyword id="KW-0804">Transcription</keyword>
<keyword id="KW-0808">Transferase</keyword>
<keyword id="KW-0862">Zinc</keyword>
<feature type="chain" id="PRO_1000086398" description="DNA-directed RNA polymerase subunit beta'">
    <location>
        <begin position="1"/>
        <end position="1316"/>
    </location>
</feature>
<feature type="region of interest" description="Disordered" evidence="2">
    <location>
        <begin position="183"/>
        <end position="209"/>
    </location>
</feature>
<feature type="binding site" evidence="1">
    <location>
        <position position="60"/>
    </location>
    <ligand>
        <name>Zn(2+)</name>
        <dbReference type="ChEBI" id="CHEBI:29105"/>
        <label>1</label>
    </ligand>
</feature>
<feature type="binding site" evidence="1">
    <location>
        <position position="62"/>
    </location>
    <ligand>
        <name>Zn(2+)</name>
        <dbReference type="ChEBI" id="CHEBI:29105"/>
        <label>1</label>
    </ligand>
</feature>
<feature type="binding site" evidence="1">
    <location>
        <position position="75"/>
    </location>
    <ligand>
        <name>Zn(2+)</name>
        <dbReference type="ChEBI" id="CHEBI:29105"/>
        <label>1</label>
    </ligand>
</feature>
<feature type="binding site" evidence="1">
    <location>
        <position position="78"/>
    </location>
    <ligand>
        <name>Zn(2+)</name>
        <dbReference type="ChEBI" id="CHEBI:29105"/>
        <label>1</label>
    </ligand>
</feature>
<feature type="binding site" evidence="1">
    <location>
        <position position="535"/>
    </location>
    <ligand>
        <name>Mg(2+)</name>
        <dbReference type="ChEBI" id="CHEBI:18420"/>
    </ligand>
</feature>
<feature type="binding site" evidence="1">
    <location>
        <position position="537"/>
    </location>
    <ligand>
        <name>Mg(2+)</name>
        <dbReference type="ChEBI" id="CHEBI:18420"/>
    </ligand>
</feature>
<feature type="binding site" evidence="1">
    <location>
        <position position="539"/>
    </location>
    <ligand>
        <name>Mg(2+)</name>
        <dbReference type="ChEBI" id="CHEBI:18420"/>
    </ligand>
</feature>
<feature type="binding site" evidence="1">
    <location>
        <position position="890"/>
    </location>
    <ligand>
        <name>Zn(2+)</name>
        <dbReference type="ChEBI" id="CHEBI:29105"/>
        <label>2</label>
    </ligand>
</feature>
<feature type="binding site" evidence="1">
    <location>
        <position position="966"/>
    </location>
    <ligand>
        <name>Zn(2+)</name>
        <dbReference type="ChEBI" id="CHEBI:29105"/>
        <label>2</label>
    </ligand>
</feature>
<feature type="binding site" evidence="1">
    <location>
        <position position="973"/>
    </location>
    <ligand>
        <name>Zn(2+)</name>
        <dbReference type="ChEBI" id="CHEBI:29105"/>
        <label>2</label>
    </ligand>
</feature>
<feature type="binding site" evidence="1">
    <location>
        <position position="976"/>
    </location>
    <ligand>
        <name>Zn(2+)</name>
        <dbReference type="ChEBI" id="CHEBI:29105"/>
        <label>2</label>
    </ligand>
</feature>
<comment type="function">
    <text evidence="1">DNA-dependent RNA polymerase catalyzes the transcription of DNA into RNA using the four ribonucleoside triphosphates as substrates.</text>
</comment>
<comment type="catalytic activity">
    <reaction evidence="1">
        <text>RNA(n) + a ribonucleoside 5'-triphosphate = RNA(n+1) + diphosphate</text>
        <dbReference type="Rhea" id="RHEA:21248"/>
        <dbReference type="Rhea" id="RHEA-COMP:14527"/>
        <dbReference type="Rhea" id="RHEA-COMP:17342"/>
        <dbReference type="ChEBI" id="CHEBI:33019"/>
        <dbReference type="ChEBI" id="CHEBI:61557"/>
        <dbReference type="ChEBI" id="CHEBI:140395"/>
        <dbReference type="EC" id="2.7.7.6"/>
    </reaction>
</comment>
<comment type="cofactor">
    <cofactor evidence="1">
        <name>Mg(2+)</name>
        <dbReference type="ChEBI" id="CHEBI:18420"/>
    </cofactor>
    <text evidence="1">Binds 1 Mg(2+) ion per subunit.</text>
</comment>
<comment type="cofactor">
    <cofactor evidence="1">
        <name>Zn(2+)</name>
        <dbReference type="ChEBI" id="CHEBI:29105"/>
    </cofactor>
    <text evidence="1">Binds 2 Zn(2+) ions per subunit.</text>
</comment>
<comment type="subunit">
    <text evidence="1">The RNAP catalytic core consists of 2 alpha, 1 beta, 1 beta' and 1 omega subunit. When a sigma factor is associated with the core the holoenzyme is formed, which can initiate transcription.</text>
</comment>
<comment type="similarity">
    <text evidence="1">Belongs to the RNA polymerase beta' chain family.</text>
</comment>
<sequence length="1316" mass="147032">MLDVNFFDELRIGLATADDIRNWSFGEVKKPETINYRTLKPEKDGLFCEKIFGPTRDWECYCGKYKRVRFKGIICERCGVEVTRAKVRRERMGHIELAAPVTHIWYFKGVPSRLGYLLDLAPKDLEKIIYFAAYVITAVDDEMRHNELSTLEAEMVVEKKAIEDQRDADLEARAQKLEADMKELEEEGAKSDVRRKVRDGGEREMRQLRDRAQRELDRLDEIWTTFTKLAPKQLIVDELLYRELQDRYGEYFEGAMGAESIKKLIETFDIDAEADSLRDTIKNGKGQKKLRALKRLKVVAAFQTNRNSPMGMVLDAVPVIPPELRPMVQLDGGRFATSDLNDLYRRVINRNNRLKRLIDLGAPEIIVNNEKRMLQESVDALFDNGRRGRPVTGPGNRPLKSLSDLLKGKQGRFRQNLLGKRVDYSGRSVIVVGPQLKLHQCGLPKLMALELFKPFVMKRLVDLNHAQNIKSAKRMVERQRPQVWDVLEEVISEHPVLLNRAPTLHRLGIQAFEPQLVEGKAIQLHPLVCEAFNADFDGDQMAVHLPLSAEAQAEARILMLSSNNILSPASGRPLAMPRLDMVTGLYFLTTEIEGDKGEFTPAAKDQPESGVYSSPAEAIMAMDRGALSVRAKIRVRLTQLRPPAEIEAERFPDGWNMGDAWTAETTLGRVLFNELLPRGYPFVNKQMHKKVQAAIINDLAERYPMIVVAQTVDKLKDAGFYWATRSGVTVSMADVLVPPEKQEILERYEAAADSIEKQYQRGKLDKGERNEALVKIWQDATEEVGQALRSHYPKDNPIITIVDSGATGNFTQTRTLAGMKGLVTNPKGEFIPRPIKSSFREGLTVLEYFINTHGARKGLADTALRTADSGYLTRRLVDVSQDVIVRETDCETERGITVTLAELQGDQLLRDQHIETSAYARTLATDAVDANGNVVVERGHDLGDPAIDALLAAGITEVKVRSVLTCATGTGVCAMCYGRSMATGKLVDIGEAVGIVAAQSIGEPGTQLTMRTFHQGGVTGGADIVGGLPRVQELFEARIPRNRAPIADVSGRIRLEESDKFYKITIVPDDGGEEVVYDKLSRRQRLKVFKHDDGSERLLTDGDHVEVGQQLLEGSADPHEVLRVQGPREVQIHLVKEVQEVYRAQGVSIHDKHIEVIVRQMLRRVTIIDSGATEFLPGSLTERGEFETENRRVVAEGGEPAAGRPVLMGITKASLATDSWLSAASFQETTRVLTDAAINCRSDKLQGLKENVIIGKLIPAGTGINRYRNIQVQPTEEARAAAYTIPSYEDQYYSPDFGQATGAAVPLDDYGYSDYR</sequence>
<reference key="1">
    <citation type="submission" date="2007-04" db="EMBL/GenBank/DDBJ databases">
        <title>Complete sequence of chromosome of Mycobacterium gilvum PYR-GCK.</title>
        <authorList>
            <consortium name="US DOE Joint Genome Institute"/>
            <person name="Copeland A."/>
            <person name="Lucas S."/>
            <person name="Lapidus A."/>
            <person name="Barry K."/>
            <person name="Detter J.C."/>
            <person name="Glavina del Rio T."/>
            <person name="Hammon N."/>
            <person name="Israni S."/>
            <person name="Dalin E."/>
            <person name="Tice H."/>
            <person name="Pitluck S."/>
            <person name="Chain P."/>
            <person name="Malfatti S."/>
            <person name="Shin M."/>
            <person name="Vergez L."/>
            <person name="Schmutz J."/>
            <person name="Larimer F."/>
            <person name="Land M."/>
            <person name="Hauser L."/>
            <person name="Kyrpides N."/>
            <person name="Mikhailova N."/>
            <person name="Miller C."/>
            <person name="Richardson P."/>
        </authorList>
    </citation>
    <scope>NUCLEOTIDE SEQUENCE [LARGE SCALE GENOMIC DNA]</scope>
    <source>
        <strain>PYR-GCK</strain>
    </source>
</reference>
<accession>A4T1P3</accession>
<dbReference type="EC" id="2.7.7.6" evidence="1"/>
<dbReference type="EMBL" id="CP000656">
    <property type="protein sequence ID" value="ABP47562.1"/>
    <property type="molecule type" value="Genomic_DNA"/>
</dbReference>
<dbReference type="SMR" id="A4T1P3"/>
<dbReference type="STRING" id="350054.Mflv_5096"/>
<dbReference type="KEGG" id="mgi:Mflv_5096"/>
<dbReference type="eggNOG" id="COG0086">
    <property type="taxonomic scope" value="Bacteria"/>
</dbReference>
<dbReference type="HOGENOM" id="CLU_000524_3_1_11"/>
<dbReference type="OrthoDB" id="9815296at2"/>
<dbReference type="GO" id="GO:0000428">
    <property type="term" value="C:DNA-directed RNA polymerase complex"/>
    <property type="evidence" value="ECO:0007669"/>
    <property type="project" value="UniProtKB-KW"/>
</dbReference>
<dbReference type="GO" id="GO:0003677">
    <property type="term" value="F:DNA binding"/>
    <property type="evidence" value="ECO:0007669"/>
    <property type="project" value="UniProtKB-UniRule"/>
</dbReference>
<dbReference type="GO" id="GO:0003899">
    <property type="term" value="F:DNA-directed RNA polymerase activity"/>
    <property type="evidence" value="ECO:0007669"/>
    <property type="project" value="UniProtKB-UniRule"/>
</dbReference>
<dbReference type="GO" id="GO:0000287">
    <property type="term" value="F:magnesium ion binding"/>
    <property type="evidence" value="ECO:0007669"/>
    <property type="project" value="UniProtKB-UniRule"/>
</dbReference>
<dbReference type="GO" id="GO:0008270">
    <property type="term" value="F:zinc ion binding"/>
    <property type="evidence" value="ECO:0007669"/>
    <property type="project" value="UniProtKB-UniRule"/>
</dbReference>
<dbReference type="GO" id="GO:0006351">
    <property type="term" value="P:DNA-templated transcription"/>
    <property type="evidence" value="ECO:0007669"/>
    <property type="project" value="UniProtKB-UniRule"/>
</dbReference>
<dbReference type="CDD" id="cd02655">
    <property type="entry name" value="RNAP_beta'_C"/>
    <property type="match status" value="1"/>
</dbReference>
<dbReference type="CDD" id="cd01609">
    <property type="entry name" value="RNAP_beta'_N"/>
    <property type="match status" value="1"/>
</dbReference>
<dbReference type="FunFam" id="1.10.150.390:FF:000002">
    <property type="entry name" value="DNA-directed RNA polymerase subunit beta"/>
    <property type="match status" value="1"/>
</dbReference>
<dbReference type="FunFam" id="1.10.40.90:FF:000001">
    <property type="entry name" value="DNA-directed RNA polymerase subunit beta"/>
    <property type="match status" value="1"/>
</dbReference>
<dbReference type="FunFam" id="4.10.860.120:FF:000001">
    <property type="entry name" value="DNA-directed RNA polymerase subunit beta"/>
    <property type="match status" value="1"/>
</dbReference>
<dbReference type="Gene3D" id="1.10.132.30">
    <property type="match status" value="1"/>
</dbReference>
<dbReference type="Gene3D" id="1.10.150.390">
    <property type="match status" value="1"/>
</dbReference>
<dbReference type="Gene3D" id="1.10.1790.20">
    <property type="match status" value="1"/>
</dbReference>
<dbReference type="Gene3D" id="1.10.40.90">
    <property type="match status" value="1"/>
</dbReference>
<dbReference type="Gene3D" id="2.40.40.20">
    <property type="match status" value="1"/>
</dbReference>
<dbReference type="Gene3D" id="2.40.50.100">
    <property type="match status" value="1"/>
</dbReference>
<dbReference type="Gene3D" id="4.10.860.120">
    <property type="entry name" value="RNA polymerase II, clamp domain"/>
    <property type="match status" value="1"/>
</dbReference>
<dbReference type="Gene3D" id="1.10.274.100">
    <property type="entry name" value="RNA polymerase Rpb1, domain 3"/>
    <property type="match status" value="1"/>
</dbReference>
<dbReference type="HAMAP" id="MF_01322">
    <property type="entry name" value="RNApol_bact_RpoC"/>
    <property type="match status" value="1"/>
</dbReference>
<dbReference type="InterPro" id="IPR045867">
    <property type="entry name" value="DNA-dir_RpoC_beta_prime"/>
</dbReference>
<dbReference type="InterPro" id="IPR012754">
    <property type="entry name" value="DNA-dir_RpoC_beta_prime_bact"/>
</dbReference>
<dbReference type="InterPro" id="IPR000722">
    <property type="entry name" value="RNA_pol_asu"/>
</dbReference>
<dbReference type="InterPro" id="IPR006592">
    <property type="entry name" value="RNA_pol_N"/>
</dbReference>
<dbReference type="InterPro" id="IPR007080">
    <property type="entry name" value="RNA_pol_Rpb1_1"/>
</dbReference>
<dbReference type="InterPro" id="IPR007066">
    <property type="entry name" value="RNA_pol_Rpb1_3"/>
</dbReference>
<dbReference type="InterPro" id="IPR042102">
    <property type="entry name" value="RNA_pol_Rpb1_3_sf"/>
</dbReference>
<dbReference type="InterPro" id="IPR007083">
    <property type="entry name" value="RNA_pol_Rpb1_4"/>
</dbReference>
<dbReference type="InterPro" id="IPR007081">
    <property type="entry name" value="RNA_pol_Rpb1_5"/>
</dbReference>
<dbReference type="InterPro" id="IPR044893">
    <property type="entry name" value="RNA_pol_Rpb1_clamp_domain"/>
</dbReference>
<dbReference type="InterPro" id="IPR038120">
    <property type="entry name" value="Rpb1_funnel_sf"/>
</dbReference>
<dbReference type="NCBIfam" id="NF011498">
    <property type="entry name" value="PRK14906.1"/>
    <property type="match status" value="1"/>
</dbReference>
<dbReference type="NCBIfam" id="TIGR02386">
    <property type="entry name" value="rpoC_TIGR"/>
    <property type="match status" value="1"/>
</dbReference>
<dbReference type="PANTHER" id="PTHR19376">
    <property type="entry name" value="DNA-DIRECTED RNA POLYMERASE"/>
    <property type="match status" value="1"/>
</dbReference>
<dbReference type="PANTHER" id="PTHR19376:SF54">
    <property type="entry name" value="DNA-DIRECTED RNA POLYMERASE SUBUNIT BETA"/>
    <property type="match status" value="1"/>
</dbReference>
<dbReference type="Pfam" id="PF04997">
    <property type="entry name" value="RNA_pol_Rpb1_1"/>
    <property type="match status" value="1"/>
</dbReference>
<dbReference type="Pfam" id="PF00623">
    <property type="entry name" value="RNA_pol_Rpb1_2"/>
    <property type="match status" value="1"/>
</dbReference>
<dbReference type="Pfam" id="PF04983">
    <property type="entry name" value="RNA_pol_Rpb1_3"/>
    <property type="match status" value="1"/>
</dbReference>
<dbReference type="Pfam" id="PF05000">
    <property type="entry name" value="RNA_pol_Rpb1_4"/>
    <property type="match status" value="1"/>
</dbReference>
<dbReference type="Pfam" id="PF04998">
    <property type="entry name" value="RNA_pol_Rpb1_5"/>
    <property type="match status" value="1"/>
</dbReference>
<dbReference type="SMART" id="SM00663">
    <property type="entry name" value="RPOLA_N"/>
    <property type="match status" value="1"/>
</dbReference>
<dbReference type="SUPFAM" id="SSF64484">
    <property type="entry name" value="beta and beta-prime subunits of DNA dependent RNA-polymerase"/>
    <property type="match status" value="1"/>
</dbReference>
<protein>
    <recommendedName>
        <fullName evidence="1">DNA-directed RNA polymerase subunit beta'</fullName>
        <shortName evidence="1">RNAP subunit beta'</shortName>
        <ecNumber evidence="1">2.7.7.6</ecNumber>
    </recommendedName>
    <alternativeName>
        <fullName evidence="1">RNA polymerase subunit beta'</fullName>
    </alternativeName>
    <alternativeName>
        <fullName evidence="1">Transcriptase subunit beta'</fullName>
    </alternativeName>
</protein>